<sequence>ADGTITFNGKVTDK</sequence>
<dbReference type="EC" id="3.2.1.14" evidence="1"/>
<dbReference type="GO" id="GO:0008843">
    <property type="term" value="F:endochitinase activity"/>
    <property type="evidence" value="ECO:0007669"/>
    <property type="project" value="UniProtKB-EC"/>
</dbReference>
<proteinExistence type="evidence at protein level"/>
<comment type="function">
    <text evidence="1">Has endochitinase activity.</text>
</comment>
<comment type="catalytic activity">
    <reaction evidence="1">
        <text>Random endo-hydrolysis of N-acetyl-beta-D-glucosaminide (1-&gt;4)-beta-linkages in chitin and chitodextrins.</text>
        <dbReference type="EC" id="3.2.1.14"/>
    </reaction>
</comment>
<comment type="biophysicochemical properties">
    <kinetics>
        <KM evidence="1">0.33 mg/ml for Colloidal Chitin</KM>
    </kinetics>
    <phDependence>
        <text evidence="1">Optimum pH is 7.</text>
    </phDependence>
    <temperatureDependence>
        <text evidence="1">Optimum temperature is 35 degrees Celsius.</text>
    </temperatureDependence>
</comment>
<organism evidence="2">
    <name type="scientific">Glutamicibacter uratoxydans</name>
    <name type="common">Arthrobacter uratoxydans</name>
    <dbReference type="NCBI Taxonomy" id="43667"/>
    <lineage>
        <taxon>Bacteria</taxon>
        <taxon>Bacillati</taxon>
        <taxon>Actinomycetota</taxon>
        <taxon>Actinomycetes</taxon>
        <taxon>Micrococcales</taxon>
        <taxon>Micrococcaceae</taxon>
        <taxon>Glutamicibacter</taxon>
    </lineage>
</organism>
<feature type="chain" id="PRO_0000452237" description="Endochitinase">
    <location>
        <begin position="1"/>
        <end position="14"/>
    </location>
</feature>
<feature type="non-terminal residue" evidence="2">
    <location>
        <position position="14"/>
    </location>
</feature>
<name>CHIGU_GLUUR</name>
<reference evidence="3" key="1">
    <citation type="thesis" date="2020" institute="University of Karachi" country="Pakistan">
        <title>Production, purification and characterization of chitinase utilizing crustacean waste.</title>
        <authorList>
            <person name="Tayyaba A."/>
        </authorList>
    </citation>
    <scope>PROTEIN SEQUENCE</scope>
    <scope>FUNCTION</scope>
    <scope>CATALYTIC ACTIVITY</scope>
    <scope>BIOPHYSICOCHEMICAL PROPERTIES</scope>
</reference>
<evidence type="ECO:0000269" key="1">
    <source ref="1"/>
</evidence>
<evidence type="ECO:0000303" key="2">
    <source ref="1"/>
</evidence>
<evidence type="ECO:0000305" key="3"/>
<accession>C0HLT5</accession>
<protein>
    <recommendedName>
        <fullName evidence="2">Endochitinase</fullName>
        <ecNumber evidence="1">3.2.1.14</ecNumber>
    </recommendedName>
</protein>
<keyword id="KW-0903">Direct protein sequencing</keyword>
<keyword id="KW-0378">Hydrolase</keyword>